<reference key="1">
    <citation type="journal article" date="2006" name="Proc. Natl. Acad. Sci. U.S.A.">
        <title>The complete genome sequence of a chronic atrophic gastritis Helicobacter pylori strain: evolution during disease progression.</title>
        <authorList>
            <person name="Oh J.D."/>
            <person name="Kling-Baeckhed H."/>
            <person name="Giannakis M."/>
            <person name="Xu J."/>
            <person name="Fulton R.S."/>
            <person name="Fulton L.A."/>
            <person name="Cordum H.S."/>
            <person name="Wang C."/>
            <person name="Elliott G."/>
            <person name="Edwards J."/>
            <person name="Mardis E.R."/>
            <person name="Engstrand L.G."/>
            <person name="Gordon J.I."/>
        </authorList>
    </citation>
    <scope>NUCLEOTIDE SEQUENCE [LARGE SCALE GENOMIC DNA]</scope>
    <source>
        <strain>HPAG1</strain>
    </source>
</reference>
<keyword id="KW-0030">Aminoacyl-tRNA synthetase</keyword>
<keyword id="KW-0067">ATP-binding</keyword>
<keyword id="KW-0963">Cytoplasm</keyword>
<keyword id="KW-0436">Ligase</keyword>
<keyword id="KW-0547">Nucleotide-binding</keyword>
<keyword id="KW-0648">Protein biosynthesis</keyword>
<sequence length="463" mass="53414">MSLIVTRFAPSPTGYLHIGGLRTAIFNYLFARANQGKFFLRIEDTDLSRNSIEAANAIIEAFKWVGLEYDGEILYQSKRFEIYKEYIQKLLDEDKAYYCYMSKDELDALREEQKARKETPRYDNRYRDFKGTPPKGIEPVVRIKVPQNEVIVFNDGVKGEVKVNTNELDDFIIARSDGTPTYNFVVIVDDALMGITDVIRGDDHLSNTPKQIVLYKALNFKIPNFFHVPMILNEEGQKLSKRHGATNVMDYQERGYLKEALVNFLARLGWSYQDKEIFSMQELLECFDPKDLNSSPSCFSWHKLNWLNAHYLKNQSAQELLELLKPFSFSDLSHLNPAQLDRLLDALKERSQTLKELALKIDEVLTAPIEYEKKVFKKLNQALVMPLLEKFKLELNKVNFNDENALENAMHKIIEEEKIKAGSFMQPLRLALLGKGGGIGLKEALFILGKTESLKRIEKFLKN</sequence>
<feature type="chain" id="PRO_0000367683" description="Glutamate--tRNA ligase 1">
    <location>
        <begin position="1"/>
        <end position="463"/>
    </location>
</feature>
<feature type="short sequence motif" description="'HIGH' region" evidence="1">
    <location>
        <begin position="10"/>
        <end position="20"/>
    </location>
</feature>
<feature type="short sequence motif" description="'KMSKS' region" evidence="1">
    <location>
        <begin position="238"/>
        <end position="242"/>
    </location>
</feature>
<feature type="binding site" evidence="1">
    <location>
        <position position="241"/>
    </location>
    <ligand>
        <name>ATP</name>
        <dbReference type="ChEBI" id="CHEBI:30616"/>
    </ligand>
</feature>
<gene>
    <name evidence="1" type="primary">gltX1</name>
    <name type="ordered locus">HPAG1_0453</name>
</gene>
<comment type="function">
    <text evidence="1">Catalyzes the attachment of glutamate to tRNA(Glu) in a two-step reaction: glutamate is first activated by ATP to form Glu-AMP and then transferred to the acceptor end of tRNA(Glu).</text>
</comment>
<comment type="catalytic activity">
    <reaction evidence="1">
        <text>tRNA(Glu) + L-glutamate + ATP = L-glutamyl-tRNA(Glu) + AMP + diphosphate</text>
        <dbReference type="Rhea" id="RHEA:23540"/>
        <dbReference type="Rhea" id="RHEA-COMP:9663"/>
        <dbReference type="Rhea" id="RHEA-COMP:9680"/>
        <dbReference type="ChEBI" id="CHEBI:29985"/>
        <dbReference type="ChEBI" id="CHEBI:30616"/>
        <dbReference type="ChEBI" id="CHEBI:33019"/>
        <dbReference type="ChEBI" id="CHEBI:78442"/>
        <dbReference type="ChEBI" id="CHEBI:78520"/>
        <dbReference type="ChEBI" id="CHEBI:456215"/>
        <dbReference type="EC" id="6.1.1.17"/>
    </reaction>
</comment>
<comment type="subunit">
    <text evidence="1">Monomer.</text>
</comment>
<comment type="subcellular location">
    <subcellularLocation>
        <location evidence="1">Cytoplasm</location>
    </subcellularLocation>
</comment>
<comment type="similarity">
    <text evidence="1">Belongs to the class-I aminoacyl-tRNA synthetase family. Glutamate--tRNA ligase type 1 subfamily.</text>
</comment>
<name>SYE1_HELPH</name>
<evidence type="ECO:0000255" key="1">
    <source>
        <dbReference type="HAMAP-Rule" id="MF_00022"/>
    </source>
</evidence>
<accession>Q1CU52</accession>
<protein>
    <recommendedName>
        <fullName evidence="1">Glutamate--tRNA ligase 1</fullName>
        <ecNumber evidence="1">6.1.1.17</ecNumber>
    </recommendedName>
    <alternativeName>
        <fullName evidence="1">Glutamyl-tRNA synthetase 1</fullName>
        <shortName evidence="1">GluRS 1</shortName>
    </alternativeName>
</protein>
<organism>
    <name type="scientific">Helicobacter pylori (strain HPAG1)</name>
    <dbReference type="NCBI Taxonomy" id="357544"/>
    <lineage>
        <taxon>Bacteria</taxon>
        <taxon>Pseudomonadati</taxon>
        <taxon>Campylobacterota</taxon>
        <taxon>Epsilonproteobacteria</taxon>
        <taxon>Campylobacterales</taxon>
        <taxon>Helicobacteraceae</taxon>
        <taxon>Helicobacter</taxon>
    </lineage>
</organism>
<proteinExistence type="inferred from homology"/>
<dbReference type="EC" id="6.1.1.17" evidence="1"/>
<dbReference type="EMBL" id="CP000241">
    <property type="protein sequence ID" value="ABF84520.1"/>
    <property type="molecule type" value="Genomic_DNA"/>
</dbReference>
<dbReference type="RefSeq" id="WP_000053238.1">
    <property type="nucleotide sequence ID" value="NC_008086.1"/>
</dbReference>
<dbReference type="SMR" id="Q1CU52"/>
<dbReference type="KEGG" id="hpa:HPAG1_0453"/>
<dbReference type="HOGENOM" id="CLU_015768_6_3_7"/>
<dbReference type="GO" id="GO:0005829">
    <property type="term" value="C:cytosol"/>
    <property type="evidence" value="ECO:0007669"/>
    <property type="project" value="TreeGrafter"/>
</dbReference>
<dbReference type="GO" id="GO:0005524">
    <property type="term" value="F:ATP binding"/>
    <property type="evidence" value="ECO:0007669"/>
    <property type="project" value="UniProtKB-UniRule"/>
</dbReference>
<dbReference type="GO" id="GO:0004818">
    <property type="term" value="F:glutamate-tRNA ligase activity"/>
    <property type="evidence" value="ECO:0007669"/>
    <property type="project" value="UniProtKB-UniRule"/>
</dbReference>
<dbReference type="GO" id="GO:0000049">
    <property type="term" value="F:tRNA binding"/>
    <property type="evidence" value="ECO:0007669"/>
    <property type="project" value="InterPro"/>
</dbReference>
<dbReference type="GO" id="GO:0008270">
    <property type="term" value="F:zinc ion binding"/>
    <property type="evidence" value="ECO:0007669"/>
    <property type="project" value="InterPro"/>
</dbReference>
<dbReference type="GO" id="GO:0006424">
    <property type="term" value="P:glutamyl-tRNA aminoacylation"/>
    <property type="evidence" value="ECO:0007669"/>
    <property type="project" value="UniProtKB-UniRule"/>
</dbReference>
<dbReference type="CDD" id="cd00808">
    <property type="entry name" value="GluRS_core"/>
    <property type="match status" value="1"/>
</dbReference>
<dbReference type="FunFam" id="3.40.50.620:FF:000288">
    <property type="entry name" value="Glutamate--tRNA ligase 1"/>
    <property type="match status" value="1"/>
</dbReference>
<dbReference type="Gene3D" id="1.10.10.350">
    <property type="match status" value="1"/>
</dbReference>
<dbReference type="Gene3D" id="3.40.50.620">
    <property type="entry name" value="HUPs"/>
    <property type="match status" value="1"/>
</dbReference>
<dbReference type="HAMAP" id="MF_00022">
    <property type="entry name" value="Glu_tRNA_synth_type1"/>
    <property type="match status" value="1"/>
</dbReference>
<dbReference type="InterPro" id="IPR045462">
    <property type="entry name" value="aa-tRNA-synth_I_cd-bd"/>
</dbReference>
<dbReference type="InterPro" id="IPR020751">
    <property type="entry name" value="aa-tRNA-synth_I_codon-bd_sub2"/>
</dbReference>
<dbReference type="InterPro" id="IPR001412">
    <property type="entry name" value="aa-tRNA-synth_I_CS"/>
</dbReference>
<dbReference type="InterPro" id="IPR008925">
    <property type="entry name" value="aa_tRNA-synth_I_cd-bd_sf"/>
</dbReference>
<dbReference type="InterPro" id="IPR004527">
    <property type="entry name" value="Glu-tRNA-ligase_bac/mito"/>
</dbReference>
<dbReference type="InterPro" id="IPR000924">
    <property type="entry name" value="Glu/Gln-tRNA-synth"/>
</dbReference>
<dbReference type="InterPro" id="IPR020058">
    <property type="entry name" value="Glu/Gln-tRNA-synth_Ib_cat-dom"/>
</dbReference>
<dbReference type="InterPro" id="IPR049940">
    <property type="entry name" value="GluQ/Sye"/>
</dbReference>
<dbReference type="InterPro" id="IPR033910">
    <property type="entry name" value="GluRS_core"/>
</dbReference>
<dbReference type="InterPro" id="IPR014729">
    <property type="entry name" value="Rossmann-like_a/b/a_fold"/>
</dbReference>
<dbReference type="NCBIfam" id="TIGR00464">
    <property type="entry name" value="gltX_bact"/>
    <property type="match status" value="1"/>
</dbReference>
<dbReference type="NCBIfam" id="NF004314">
    <property type="entry name" value="PRK05710.1-3"/>
    <property type="match status" value="1"/>
</dbReference>
<dbReference type="PANTHER" id="PTHR43311">
    <property type="entry name" value="GLUTAMATE--TRNA LIGASE"/>
    <property type="match status" value="1"/>
</dbReference>
<dbReference type="PANTHER" id="PTHR43311:SF2">
    <property type="entry name" value="GLUTAMATE--TRNA LIGASE, MITOCHONDRIAL-RELATED"/>
    <property type="match status" value="1"/>
</dbReference>
<dbReference type="Pfam" id="PF19269">
    <property type="entry name" value="Anticodon_2"/>
    <property type="match status" value="1"/>
</dbReference>
<dbReference type="Pfam" id="PF00749">
    <property type="entry name" value="tRNA-synt_1c"/>
    <property type="match status" value="1"/>
</dbReference>
<dbReference type="PRINTS" id="PR00987">
    <property type="entry name" value="TRNASYNTHGLU"/>
</dbReference>
<dbReference type="SUPFAM" id="SSF48163">
    <property type="entry name" value="An anticodon-binding domain of class I aminoacyl-tRNA synthetases"/>
    <property type="match status" value="1"/>
</dbReference>
<dbReference type="SUPFAM" id="SSF52374">
    <property type="entry name" value="Nucleotidylyl transferase"/>
    <property type="match status" value="1"/>
</dbReference>
<dbReference type="PROSITE" id="PS00178">
    <property type="entry name" value="AA_TRNA_LIGASE_I"/>
    <property type="match status" value="1"/>
</dbReference>